<dbReference type="PIR" id="A00146">
    <property type="entry name" value="CCQFCT"/>
</dbReference>
<dbReference type="SMR" id="P00153"/>
<dbReference type="GO" id="GO:0042597">
    <property type="term" value="C:periplasmic space"/>
    <property type="evidence" value="ECO:0007669"/>
    <property type="project" value="InterPro"/>
</dbReference>
<dbReference type="GO" id="GO:0009055">
    <property type="term" value="F:electron transfer activity"/>
    <property type="evidence" value="ECO:0007669"/>
    <property type="project" value="InterPro"/>
</dbReference>
<dbReference type="GO" id="GO:0020037">
    <property type="term" value="F:heme binding"/>
    <property type="evidence" value="ECO:0007669"/>
    <property type="project" value="InterPro"/>
</dbReference>
<dbReference type="GO" id="GO:0005506">
    <property type="term" value="F:iron ion binding"/>
    <property type="evidence" value="ECO:0007669"/>
    <property type="project" value="InterPro"/>
</dbReference>
<dbReference type="GO" id="GO:0022900">
    <property type="term" value="P:electron transport chain"/>
    <property type="evidence" value="ECO:0007669"/>
    <property type="project" value="InterPro"/>
</dbReference>
<dbReference type="Gene3D" id="1.20.120.10">
    <property type="entry name" value="Cytochrome c/b562"/>
    <property type="match status" value="1"/>
</dbReference>
<dbReference type="InterPro" id="IPR010980">
    <property type="entry name" value="Cyt_c/b562"/>
</dbReference>
<dbReference type="InterPro" id="IPR002321">
    <property type="entry name" value="Cyt_c_II"/>
</dbReference>
<dbReference type="InterPro" id="IPR012127">
    <property type="entry name" value="Cyt_c_prime"/>
</dbReference>
<dbReference type="InterPro" id="IPR015984">
    <property type="entry name" value="Cyt_c_prime_subgr"/>
</dbReference>
<dbReference type="Pfam" id="PF01322">
    <property type="entry name" value="Cytochrom_C_2"/>
    <property type="match status" value="1"/>
</dbReference>
<dbReference type="PIRSF" id="PIRSF000027">
    <property type="entry name" value="Cytc_c_prime"/>
    <property type="match status" value="1"/>
</dbReference>
<dbReference type="PRINTS" id="PR00608">
    <property type="entry name" value="CYTCHROMECII"/>
</dbReference>
<dbReference type="SUPFAM" id="SSF47175">
    <property type="entry name" value="Cytochromes"/>
    <property type="match status" value="1"/>
</dbReference>
<dbReference type="PROSITE" id="PS51009">
    <property type="entry name" value="CYTCII"/>
    <property type="match status" value="1"/>
</dbReference>
<proteinExistence type="evidence at protein level"/>
<reference key="1">
    <citation type="journal article" date="1979" name="Nature">
        <title>Anomalies in amino acid sequences of small cytochromes c and cytochromes c' from two species of purple photosynthetic bacteria.</title>
        <authorList>
            <person name="Ambler R.P."/>
            <person name="Meyer T.E."/>
            <person name="Kamen M.D."/>
        </authorList>
    </citation>
    <scope>PROTEIN SEQUENCE</scope>
</reference>
<keyword id="KW-0903">Direct protein sequencing</keyword>
<keyword id="KW-0249">Electron transport</keyword>
<keyword id="KW-0349">Heme</keyword>
<keyword id="KW-0408">Iron</keyword>
<keyword id="KW-0479">Metal-binding</keyword>
<keyword id="KW-0813">Transport</keyword>
<protein>
    <recommendedName>
        <fullName>Cytochrome c'</fullName>
    </recommendedName>
</protein>
<sequence length="133" mass="14313">EPAKSEDLIKWRQSAYQVLHWNMDRLKANIDSPQYNKDDGIKAANTIAAIANSGMGSLFAAGTETGKGWHPTSVKPAFFTDGKKVGEVAVAFNKEANELAKVAATGDAAAVKAQFGKVGQTCKACHDDFRRKD</sequence>
<evidence type="ECO:0000250" key="1">
    <source>
        <dbReference type="UniProtKB" id="P00147"/>
    </source>
</evidence>
<feature type="chain" id="PRO_0000108378" description="Cytochrome c'">
    <location>
        <begin position="1"/>
        <end position="133"/>
    </location>
</feature>
<feature type="binding site" evidence="1">
    <location>
        <position position="12"/>
    </location>
    <ligand>
        <name>heme c</name>
        <dbReference type="ChEBI" id="CHEBI:61717"/>
    </ligand>
</feature>
<feature type="binding site" evidence="1">
    <location>
        <position position="72"/>
    </location>
    <ligand>
        <name>heme c</name>
        <dbReference type="ChEBI" id="CHEBI:61717"/>
    </ligand>
</feature>
<feature type="binding site" description="covalent" evidence="1">
    <location>
        <position position="122"/>
    </location>
    <ligand>
        <name>heme c</name>
        <dbReference type="ChEBI" id="CHEBI:61717"/>
    </ligand>
</feature>
<feature type="binding site" description="covalent" evidence="1">
    <location>
        <position position="125"/>
    </location>
    <ligand>
        <name>heme c</name>
        <dbReference type="ChEBI" id="CHEBI:61717"/>
    </ligand>
</feature>
<feature type="binding site" description="axial binding residue" evidence="1">
    <location>
        <position position="126"/>
    </location>
    <ligand>
        <name>heme c</name>
        <dbReference type="ChEBI" id="CHEBI:61717"/>
    </ligand>
    <ligandPart>
        <name>Fe</name>
        <dbReference type="ChEBI" id="CHEBI:18248"/>
    </ligandPart>
</feature>
<name>CYCP_RHOTE</name>
<accession>P00153</accession>
<comment type="function">
    <text>Cytochrome c' is the most widely occurring bacterial c-type cytochrome. Cytochromes c' are high-spin proteins and the heme has no sixth ligand. Their exact function is not known.</text>
</comment>
<comment type="PTM">
    <text evidence="1">Binds 1 heme c group covalently per subunit.</text>
</comment>
<organism>
    <name type="scientific">Rhodocyclus tenuis</name>
    <name type="common">Rhodospirillum tenue</name>
    <dbReference type="NCBI Taxonomy" id="1066"/>
    <lineage>
        <taxon>Bacteria</taxon>
        <taxon>Pseudomonadati</taxon>
        <taxon>Pseudomonadota</taxon>
        <taxon>Betaproteobacteria</taxon>
        <taxon>Rhodocyclales</taxon>
        <taxon>Rhodocyclaceae</taxon>
        <taxon>Rhodocyclus</taxon>
    </lineage>
</organism>